<protein>
    <recommendedName>
        <fullName>ATP synthase subunit a</fullName>
    </recommendedName>
    <alternativeName>
        <fullName>F-ATPase protein 6</fullName>
    </alternativeName>
</protein>
<geneLocation type="mitochondrion"/>
<accession>P14569</accession>
<comment type="function">
    <text>Mitochondrial membrane ATP synthase (F(1)F(0) ATP synthase or Complex V) produces ATP from ADP in the presence of a proton gradient across the membrane which is generated by electron transport complexes of the respiratory chain. F-type ATPases consist of two structural domains, F(1) - containing the extramembraneous catalytic core and F(0) - containing the membrane proton channel, linked together by a central stalk and a peripheral stalk. During catalysis, ATP synthesis in the catalytic domain of F(1) is coupled via a rotary mechanism of the central stalk subunits to proton translocation. Key component of the proton channel; it may play a direct role in the translocation of protons across the membrane.</text>
</comment>
<comment type="subunit">
    <text>F-type ATPases have 2 components, CF(1) - the catalytic core - and CF(0) - the membrane proton channel. CF(1) has five subunits: alpha(3), beta(3), gamma(1), delta(1), epsilon(1). CF(0) has three main subunits: a, b and c.</text>
</comment>
<comment type="subcellular location">
    <subcellularLocation>
        <location>Mitochondrion inner membrane</location>
        <topology>Multi-pass membrane protein</topology>
    </subcellularLocation>
</comment>
<comment type="similarity">
    <text evidence="2">Belongs to the ATPase A chain family.</text>
</comment>
<feature type="chain" id="PRO_0000082132" description="ATP synthase subunit a">
    <location>
        <begin position="1"/>
        <end position="225"/>
    </location>
</feature>
<feature type="transmembrane region" description="Helical" evidence="1">
    <location>
        <begin position="18"/>
        <end position="38"/>
    </location>
</feature>
<feature type="transmembrane region" description="Helical" evidence="1">
    <location>
        <begin position="73"/>
        <end position="93"/>
    </location>
</feature>
<feature type="transmembrane region" description="Helical" evidence="1">
    <location>
        <begin position="100"/>
        <end position="120"/>
    </location>
</feature>
<feature type="transmembrane region" description="Helical" evidence="1">
    <location>
        <begin position="126"/>
        <end position="146"/>
    </location>
</feature>
<feature type="transmembrane region" description="Helical" evidence="1">
    <location>
        <begin position="156"/>
        <end position="176"/>
    </location>
</feature>
<feature type="transmembrane region" description="Helical" evidence="1">
    <location>
        <begin position="187"/>
        <end position="207"/>
    </location>
</feature>
<reference key="1">
    <citation type="journal article" date="1988" name="Curr. Genet.">
        <title>Different mitochondrial gene orders among insects: exchanged tRNA gene positions in the COII/COIII region between an orthopteran and a dipteran species.</title>
        <authorList>
            <person name="Haucke H.R."/>
            <person name="Gellissen G."/>
        </authorList>
    </citation>
    <scope>NUCLEOTIDE SEQUENCE [GENOMIC DNA]</scope>
</reference>
<reference key="2">
    <citation type="journal article" date="1995" name="J. Mol. Evol.">
        <title>The sequence, organization, and evolution of the Locusta migratoria mitochondrial genome.</title>
        <authorList>
            <person name="Flook P.K."/>
            <person name="Rowell C.H.F."/>
            <person name="Gellissen G."/>
        </authorList>
    </citation>
    <scope>NUCLEOTIDE SEQUENCE [GENOMIC DNA]</scope>
</reference>
<organism>
    <name type="scientific">Locusta migratoria</name>
    <name type="common">Migratory locust</name>
    <dbReference type="NCBI Taxonomy" id="7004"/>
    <lineage>
        <taxon>Eukaryota</taxon>
        <taxon>Metazoa</taxon>
        <taxon>Ecdysozoa</taxon>
        <taxon>Arthropoda</taxon>
        <taxon>Hexapoda</taxon>
        <taxon>Insecta</taxon>
        <taxon>Pterygota</taxon>
        <taxon>Neoptera</taxon>
        <taxon>Polyneoptera</taxon>
        <taxon>Orthoptera</taxon>
        <taxon>Caelifera</taxon>
        <taxon>Acrididea</taxon>
        <taxon>Acridomorpha</taxon>
        <taxon>Acridoidea</taxon>
        <taxon>Acrididae</taxon>
        <taxon>Oedipodinae</taxon>
        <taxon>Locusta</taxon>
    </lineage>
</organism>
<dbReference type="EMBL" id="X13975">
    <property type="protein sequence ID" value="CAA32155.1"/>
    <property type="molecule type" value="Genomic_DNA"/>
</dbReference>
<dbReference type="EMBL" id="X80245">
    <property type="protein sequence ID" value="CAA56531.1"/>
    <property type="molecule type" value="Genomic_DNA"/>
</dbReference>
<dbReference type="PIR" id="T11471">
    <property type="entry name" value="T11471"/>
</dbReference>
<dbReference type="RefSeq" id="NP_007294.1">
    <property type="nucleotide sequence ID" value="NC_001712.1"/>
</dbReference>
<dbReference type="SMR" id="P14569"/>
<dbReference type="GeneID" id="807958"/>
<dbReference type="CTD" id="4508"/>
<dbReference type="GO" id="GO:0005743">
    <property type="term" value="C:mitochondrial inner membrane"/>
    <property type="evidence" value="ECO:0007669"/>
    <property type="project" value="UniProtKB-SubCell"/>
</dbReference>
<dbReference type="GO" id="GO:0045259">
    <property type="term" value="C:proton-transporting ATP synthase complex"/>
    <property type="evidence" value="ECO:0007669"/>
    <property type="project" value="UniProtKB-KW"/>
</dbReference>
<dbReference type="GO" id="GO:0046933">
    <property type="term" value="F:proton-transporting ATP synthase activity, rotational mechanism"/>
    <property type="evidence" value="ECO:0007669"/>
    <property type="project" value="TreeGrafter"/>
</dbReference>
<dbReference type="CDD" id="cd00310">
    <property type="entry name" value="ATP-synt_Fo_a_6"/>
    <property type="match status" value="1"/>
</dbReference>
<dbReference type="Gene3D" id="1.20.120.220">
    <property type="entry name" value="ATP synthase, F0 complex, subunit A"/>
    <property type="match status" value="1"/>
</dbReference>
<dbReference type="InterPro" id="IPR000568">
    <property type="entry name" value="ATP_synth_F0_asu"/>
</dbReference>
<dbReference type="InterPro" id="IPR023011">
    <property type="entry name" value="ATP_synth_F0_asu_AS"/>
</dbReference>
<dbReference type="InterPro" id="IPR045083">
    <property type="entry name" value="ATP_synth_F0_asu_bact/mt"/>
</dbReference>
<dbReference type="InterPro" id="IPR035908">
    <property type="entry name" value="F0_ATP_A_sf"/>
</dbReference>
<dbReference type="NCBIfam" id="TIGR01131">
    <property type="entry name" value="ATP_synt_6_or_A"/>
    <property type="match status" value="1"/>
</dbReference>
<dbReference type="PANTHER" id="PTHR11410">
    <property type="entry name" value="ATP SYNTHASE SUBUNIT A"/>
    <property type="match status" value="1"/>
</dbReference>
<dbReference type="PANTHER" id="PTHR11410:SF0">
    <property type="entry name" value="ATP SYNTHASE SUBUNIT A"/>
    <property type="match status" value="1"/>
</dbReference>
<dbReference type="Pfam" id="PF00119">
    <property type="entry name" value="ATP-synt_A"/>
    <property type="match status" value="1"/>
</dbReference>
<dbReference type="PRINTS" id="PR00123">
    <property type="entry name" value="ATPASEA"/>
</dbReference>
<dbReference type="SUPFAM" id="SSF81336">
    <property type="entry name" value="F1F0 ATP synthase subunit A"/>
    <property type="match status" value="1"/>
</dbReference>
<dbReference type="PROSITE" id="PS00449">
    <property type="entry name" value="ATPASE_A"/>
    <property type="match status" value="1"/>
</dbReference>
<sequence length="225" mass="25405">MMTNLFSTFDPSTNLFNLSLNWTSTFLGLLLIPSMFWLMPSRINILWNKMNLNLHNEFKTLLGKNSFQGSTLILISIFIMMLFNNFMGLFPYIFTSTSHMTLTFSIALPMWMSFMLFGWINNTNHMFTHLVPQGTPNALMSFMVLIETISNVIRPGTLAVRLAANMIAGHLLLTLLGNTGPSLTTSIMLFLIIGQMLLLILESAVAMIQAYVFSILSTLYSSEVY</sequence>
<gene>
    <name type="primary">ATP6</name>
</gene>
<evidence type="ECO:0000255" key="1"/>
<evidence type="ECO:0000305" key="2"/>
<keyword id="KW-0066">ATP synthesis</keyword>
<keyword id="KW-0138">CF(0)</keyword>
<keyword id="KW-0375">Hydrogen ion transport</keyword>
<keyword id="KW-0406">Ion transport</keyword>
<keyword id="KW-0472">Membrane</keyword>
<keyword id="KW-0496">Mitochondrion</keyword>
<keyword id="KW-0999">Mitochondrion inner membrane</keyword>
<keyword id="KW-0812">Transmembrane</keyword>
<keyword id="KW-1133">Transmembrane helix</keyword>
<keyword id="KW-0813">Transport</keyword>
<proteinExistence type="inferred from homology"/>
<name>ATP6_LOCMI</name>